<reference key="1">
    <citation type="journal article" date="2004" name="FEBS Lett.">
        <title>ALS2CL, the novel protein highly homologous to the carboxy-terminal half of ALS2, binds to Rab5 and modulates endosome dynamics.</title>
        <authorList>
            <person name="Hadano S."/>
            <person name="Otomo A."/>
            <person name="Suzuki-Utsunomiya K."/>
            <person name="Kunita R."/>
            <person name="Yanagisawa Y."/>
            <person name="Showguchi-Miyata J."/>
            <person name="Mizumura H."/>
            <person name="Ikeda J.-E."/>
        </authorList>
    </citation>
    <scope>NUCLEOTIDE SEQUENCE [MRNA] (ISOFORM 1)</scope>
    <scope>FUNCTION</scope>
    <scope>INTERACTION WITH RAB5A</scope>
    <scope>SUBCELLULAR LOCATION</scope>
    <scope>TISSUE SPECIFICITY</scope>
    <source>
        <tissue>Liver</tissue>
    </source>
</reference>
<reference key="2">
    <citation type="journal article" date="2004" name="Nat. Genet.">
        <title>Complete sequencing and characterization of 21,243 full-length human cDNAs.</title>
        <authorList>
            <person name="Ota T."/>
            <person name="Suzuki Y."/>
            <person name="Nishikawa T."/>
            <person name="Otsuki T."/>
            <person name="Sugiyama T."/>
            <person name="Irie R."/>
            <person name="Wakamatsu A."/>
            <person name="Hayashi K."/>
            <person name="Sato H."/>
            <person name="Nagai K."/>
            <person name="Kimura K."/>
            <person name="Makita H."/>
            <person name="Sekine M."/>
            <person name="Obayashi M."/>
            <person name="Nishi T."/>
            <person name="Shibahara T."/>
            <person name="Tanaka T."/>
            <person name="Ishii S."/>
            <person name="Yamamoto J."/>
            <person name="Saito K."/>
            <person name="Kawai Y."/>
            <person name="Isono Y."/>
            <person name="Nakamura Y."/>
            <person name="Nagahari K."/>
            <person name="Murakami K."/>
            <person name="Yasuda T."/>
            <person name="Iwayanagi T."/>
            <person name="Wagatsuma M."/>
            <person name="Shiratori A."/>
            <person name="Sudo H."/>
            <person name="Hosoiri T."/>
            <person name="Kaku Y."/>
            <person name="Kodaira H."/>
            <person name="Kondo H."/>
            <person name="Sugawara M."/>
            <person name="Takahashi M."/>
            <person name="Kanda K."/>
            <person name="Yokoi T."/>
            <person name="Furuya T."/>
            <person name="Kikkawa E."/>
            <person name="Omura Y."/>
            <person name="Abe K."/>
            <person name="Kamihara K."/>
            <person name="Katsuta N."/>
            <person name="Sato K."/>
            <person name="Tanikawa M."/>
            <person name="Yamazaki M."/>
            <person name="Ninomiya K."/>
            <person name="Ishibashi T."/>
            <person name="Yamashita H."/>
            <person name="Murakawa K."/>
            <person name="Fujimori K."/>
            <person name="Tanai H."/>
            <person name="Kimata M."/>
            <person name="Watanabe M."/>
            <person name="Hiraoka S."/>
            <person name="Chiba Y."/>
            <person name="Ishida S."/>
            <person name="Ono Y."/>
            <person name="Takiguchi S."/>
            <person name="Watanabe S."/>
            <person name="Yosida M."/>
            <person name="Hotuta T."/>
            <person name="Kusano J."/>
            <person name="Kanehori K."/>
            <person name="Takahashi-Fujii A."/>
            <person name="Hara H."/>
            <person name="Tanase T.-O."/>
            <person name="Nomura Y."/>
            <person name="Togiya S."/>
            <person name="Komai F."/>
            <person name="Hara R."/>
            <person name="Takeuchi K."/>
            <person name="Arita M."/>
            <person name="Imose N."/>
            <person name="Musashino K."/>
            <person name="Yuuki H."/>
            <person name="Oshima A."/>
            <person name="Sasaki N."/>
            <person name="Aotsuka S."/>
            <person name="Yoshikawa Y."/>
            <person name="Matsunawa H."/>
            <person name="Ichihara T."/>
            <person name="Shiohata N."/>
            <person name="Sano S."/>
            <person name="Moriya S."/>
            <person name="Momiyama H."/>
            <person name="Satoh N."/>
            <person name="Takami S."/>
            <person name="Terashima Y."/>
            <person name="Suzuki O."/>
            <person name="Nakagawa S."/>
            <person name="Senoh A."/>
            <person name="Mizoguchi H."/>
            <person name="Goto Y."/>
            <person name="Shimizu F."/>
            <person name="Wakebe H."/>
            <person name="Hishigaki H."/>
            <person name="Watanabe T."/>
            <person name="Sugiyama A."/>
            <person name="Takemoto M."/>
            <person name="Kawakami B."/>
            <person name="Yamazaki M."/>
            <person name="Watanabe K."/>
            <person name="Kumagai A."/>
            <person name="Itakura S."/>
            <person name="Fukuzumi Y."/>
            <person name="Fujimori Y."/>
            <person name="Komiyama M."/>
            <person name="Tashiro H."/>
            <person name="Tanigami A."/>
            <person name="Fujiwara T."/>
            <person name="Ono T."/>
            <person name="Yamada K."/>
            <person name="Fujii Y."/>
            <person name="Ozaki K."/>
            <person name="Hirao M."/>
            <person name="Ohmori Y."/>
            <person name="Kawabata A."/>
            <person name="Hikiji T."/>
            <person name="Kobatake N."/>
            <person name="Inagaki H."/>
            <person name="Ikema Y."/>
            <person name="Okamoto S."/>
            <person name="Okitani R."/>
            <person name="Kawakami T."/>
            <person name="Noguchi S."/>
            <person name="Itoh T."/>
            <person name="Shigeta K."/>
            <person name="Senba T."/>
            <person name="Matsumura K."/>
            <person name="Nakajima Y."/>
            <person name="Mizuno T."/>
            <person name="Morinaga M."/>
            <person name="Sasaki M."/>
            <person name="Togashi T."/>
            <person name="Oyama M."/>
            <person name="Hata H."/>
            <person name="Watanabe M."/>
            <person name="Komatsu T."/>
            <person name="Mizushima-Sugano J."/>
            <person name="Satoh T."/>
            <person name="Shirai Y."/>
            <person name="Takahashi Y."/>
            <person name="Nakagawa K."/>
            <person name="Okumura K."/>
            <person name="Nagase T."/>
            <person name="Nomura N."/>
            <person name="Kikuchi H."/>
            <person name="Masuho Y."/>
            <person name="Yamashita R."/>
            <person name="Nakai K."/>
            <person name="Yada T."/>
            <person name="Nakamura Y."/>
            <person name="Ohara O."/>
            <person name="Isogai T."/>
            <person name="Sugano S."/>
        </authorList>
    </citation>
    <scope>NUCLEOTIDE SEQUENCE [LARGE SCALE MRNA] (ISOFORMS 1; 2; 3; 4 AND 6)</scope>
    <source>
        <tissue>Placenta</tissue>
        <tissue>Tongue</tissue>
        <tissue>Trachea</tissue>
        <tissue>Uterus</tissue>
    </source>
</reference>
<reference key="3">
    <citation type="journal article" date="2006" name="Nature">
        <title>The DNA sequence, annotation and analysis of human chromosome 3.</title>
        <authorList>
            <person name="Muzny D.M."/>
            <person name="Scherer S.E."/>
            <person name="Kaul R."/>
            <person name="Wang J."/>
            <person name="Yu J."/>
            <person name="Sudbrak R."/>
            <person name="Buhay C.J."/>
            <person name="Chen R."/>
            <person name="Cree A."/>
            <person name="Ding Y."/>
            <person name="Dugan-Rocha S."/>
            <person name="Gill R."/>
            <person name="Gunaratne P."/>
            <person name="Harris R.A."/>
            <person name="Hawes A.C."/>
            <person name="Hernandez J."/>
            <person name="Hodgson A.V."/>
            <person name="Hume J."/>
            <person name="Jackson A."/>
            <person name="Khan Z.M."/>
            <person name="Kovar-Smith C."/>
            <person name="Lewis L.R."/>
            <person name="Lozado R.J."/>
            <person name="Metzker M.L."/>
            <person name="Milosavljevic A."/>
            <person name="Miner G.R."/>
            <person name="Morgan M.B."/>
            <person name="Nazareth L.V."/>
            <person name="Scott G."/>
            <person name="Sodergren E."/>
            <person name="Song X.-Z."/>
            <person name="Steffen D."/>
            <person name="Wei S."/>
            <person name="Wheeler D.A."/>
            <person name="Wright M.W."/>
            <person name="Worley K.C."/>
            <person name="Yuan Y."/>
            <person name="Zhang Z."/>
            <person name="Adams C.Q."/>
            <person name="Ansari-Lari M.A."/>
            <person name="Ayele M."/>
            <person name="Brown M.J."/>
            <person name="Chen G."/>
            <person name="Chen Z."/>
            <person name="Clendenning J."/>
            <person name="Clerc-Blankenburg K.P."/>
            <person name="Chen R."/>
            <person name="Chen Z."/>
            <person name="Davis C."/>
            <person name="Delgado O."/>
            <person name="Dinh H.H."/>
            <person name="Dong W."/>
            <person name="Draper H."/>
            <person name="Ernst S."/>
            <person name="Fu G."/>
            <person name="Gonzalez-Garay M.L."/>
            <person name="Garcia D.K."/>
            <person name="Gillett W."/>
            <person name="Gu J."/>
            <person name="Hao B."/>
            <person name="Haugen E."/>
            <person name="Havlak P."/>
            <person name="He X."/>
            <person name="Hennig S."/>
            <person name="Hu S."/>
            <person name="Huang W."/>
            <person name="Jackson L.R."/>
            <person name="Jacob L.S."/>
            <person name="Kelly S.H."/>
            <person name="Kube M."/>
            <person name="Levy R."/>
            <person name="Li Z."/>
            <person name="Liu B."/>
            <person name="Liu J."/>
            <person name="Liu W."/>
            <person name="Lu J."/>
            <person name="Maheshwari M."/>
            <person name="Nguyen B.-V."/>
            <person name="Okwuonu G.O."/>
            <person name="Palmeiri A."/>
            <person name="Pasternak S."/>
            <person name="Perez L.M."/>
            <person name="Phelps K.A."/>
            <person name="Plopper F.J."/>
            <person name="Qiang B."/>
            <person name="Raymond C."/>
            <person name="Rodriguez R."/>
            <person name="Saenphimmachak C."/>
            <person name="Santibanez J."/>
            <person name="Shen H."/>
            <person name="Shen Y."/>
            <person name="Subramanian S."/>
            <person name="Tabor P.E."/>
            <person name="Verduzco D."/>
            <person name="Waldron L."/>
            <person name="Wang J."/>
            <person name="Wang J."/>
            <person name="Wang Q."/>
            <person name="Williams G.A."/>
            <person name="Wong G.K.-S."/>
            <person name="Yao Z."/>
            <person name="Zhang J."/>
            <person name="Zhang X."/>
            <person name="Zhao G."/>
            <person name="Zhou J."/>
            <person name="Zhou Y."/>
            <person name="Nelson D."/>
            <person name="Lehrach H."/>
            <person name="Reinhardt R."/>
            <person name="Naylor S.L."/>
            <person name="Yang H."/>
            <person name="Olson M."/>
            <person name="Weinstock G."/>
            <person name="Gibbs R.A."/>
        </authorList>
    </citation>
    <scope>NUCLEOTIDE SEQUENCE [LARGE SCALE GENOMIC DNA]</scope>
</reference>
<reference key="4">
    <citation type="submission" date="2005-07" db="EMBL/GenBank/DDBJ databases">
        <authorList>
            <person name="Mural R.J."/>
            <person name="Istrail S."/>
            <person name="Sutton G.G."/>
            <person name="Florea L."/>
            <person name="Halpern A.L."/>
            <person name="Mobarry C.M."/>
            <person name="Lippert R."/>
            <person name="Walenz B."/>
            <person name="Shatkay H."/>
            <person name="Dew I."/>
            <person name="Miller J.R."/>
            <person name="Flanigan M.J."/>
            <person name="Edwards N.J."/>
            <person name="Bolanos R."/>
            <person name="Fasulo D."/>
            <person name="Halldorsson B.V."/>
            <person name="Hannenhalli S."/>
            <person name="Turner R."/>
            <person name="Yooseph S."/>
            <person name="Lu F."/>
            <person name="Nusskern D.R."/>
            <person name="Shue B.C."/>
            <person name="Zheng X.H."/>
            <person name="Zhong F."/>
            <person name="Delcher A.L."/>
            <person name="Huson D.H."/>
            <person name="Kravitz S.A."/>
            <person name="Mouchard L."/>
            <person name="Reinert K."/>
            <person name="Remington K.A."/>
            <person name="Clark A.G."/>
            <person name="Waterman M.S."/>
            <person name="Eichler E.E."/>
            <person name="Adams M.D."/>
            <person name="Hunkapiller M.W."/>
            <person name="Myers E.W."/>
            <person name="Venter J.C."/>
        </authorList>
    </citation>
    <scope>NUCLEOTIDE SEQUENCE [LARGE SCALE GENOMIC DNA]</scope>
</reference>
<reference key="5">
    <citation type="journal article" date="2004" name="Genome Res.">
        <title>The status, quality, and expansion of the NIH full-length cDNA project: the Mammalian Gene Collection (MGC).</title>
        <authorList>
            <consortium name="The MGC Project Team"/>
        </authorList>
    </citation>
    <scope>NUCLEOTIDE SEQUENCE [LARGE SCALE MRNA] (ISOFORM 5)</scope>
    <scope>NUCLEOTIDE SEQUENCE [LARGE SCALE MRNA] OF 293-953 (ISOFORM 1)</scope>
    <source>
        <tissue>Prostate</tissue>
    </source>
</reference>
<reference key="6">
    <citation type="journal article" date="2007" name="BMC Genomics">
        <title>The full-ORF clone resource of the German cDNA consortium.</title>
        <authorList>
            <person name="Bechtel S."/>
            <person name="Rosenfelder H."/>
            <person name="Duda A."/>
            <person name="Schmidt C.P."/>
            <person name="Ernst U."/>
            <person name="Wellenreuther R."/>
            <person name="Mehrle A."/>
            <person name="Schuster C."/>
            <person name="Bahr A."/>
            <person name="Bloecker H."/>
            <person name="Heubner D."/>
            <person name="Hoerlein A."/>
            <person name="Michel G."/>
            <person name="Wedler H."/>
            <person name="Koehrer K."/>
            <person name="Ottenwaelder B."/>
            <person name="Poustka A."/>
            <person name="Wiemann S."/>
            <person name="Schupp I."/>
        </authorList>
    </citation>
    <scope>NUCLEOTIDE SEQUENCE [LARGE SCALE MRNA] OF 1-392 (ISOFORM 1)</scope>
    <scope>VARIANT GLN-45</scope>
    <source>
        <tissue>Cervix</tissue>
    </source>
</reference>
<reference key="7">
    <citation type="journal article" date="2005" name="Methods Enzymol.">
        <title>Purification and functional analyses of ALS2 and its homologue.</title>
        <authorList>
            <person name="Hadano S."/>
            <person name="Ikeda J.-E."/>
        </authorList>
    </citation>
    <scope>FUNCTION</scope>
</reference>
<reference key="8">
    <citation type="journal article" date="2007" name="Biochem. Biophys. Res. Commun.">
        <title>ALS2CL, a novel ALS2-interactor, modulates ALS2-mediated endosome dynamics.</title>
        <authorList>
            <person name="Suzuki-Utsunomiya K."/>
            <person name="Hadano S."/>
            <person name="Otomo A."/>
            <person name="Kunita R."/>
            <person name="Mizumura H."/>
            <person name="Osuga H."/>
            <person name="Ikeda J.-E."/>
        </authorList>
    </citation>
    <scope>FUNCTION</scope>
    <scope>HOMODIMERIZATION</scope>
    <scope>INTERACTION WITH ALS2</scope>
    <scope>SUBCELLULAR LOCATION</scope>
</reference>
<reference key="9">
    <citation type="journal article" date="2006" name="Science">
        <title>The consensus coding sequences of human breast and colorectal cancers.</title>
        <authorList>
            <person name="Sjoeblom T."/>
            <person name="Jones S."/>
            <person name="Wood L.D."/>
            <person name="Parsons D.W."/>
            <person name="Lin J."/>
            <person name="Barber T.D."/>
            <person name="Mandelker D."/>
            <person name="Leary R.J."/>
            <person name="Ptak J."/>
            <person name="Silliman N."/>
            <person name="Szabo S."/>
            <person name="Buckhaults P."/>
            <person name="Farrell C."/>
            <person name="Meeh P."/>
            <person name="Markowitz S.D."/>
            <person name="Willis J."/>
            <person name="Dawson D."/>
            <person name="Willson J.K.V."/>
            <person name="Gazdar A.F."/>
            <person name="Hartigan J."/>
            <person name="Wu L."/>
            <person name="Liu C."/>
            <person name="Parmigiani G."/>
            <person name="Park B.H."/>
            <person name="Bachman K.E."/>
            <person name="Papadopoulos N."/>
            <person name="Vogelstein B."/>
            <person name="Kinzler K.W."/>
            <person name="Velculescu V.E."/>
        </authorList>
    </citation>
    <scope>VARIANTS [LARGE SCALE ANALYSIS] GLU-280 AND PHE-576</scope>
</reference>
<sequence length="953" mass="107748">MCNPEEAALLRLEEVFSATLAHVNSLVLQPLLPAAPDPSDPWGRECLRLLQQLHKSSQQLWEVTEESLHSLQERLRYPDSTGLESLLLLRGADRVLQAHIEYIESYTSCMVVQAFQKAAKRRSEYWRGQRKALRQLLSGVSSEGSVGASLGQALHQPLAHHVQQYVLLLLSLGDTIGEHHPTRELVVNAVTLFGNLQSFMKQELDQAVATQALWHTLRGRLRDVLCTPAHRLLQDSQDVPVTVAPLRAERVLLFDDALVLLQGHNVHTFDLKLVWVDPGQDGCTFHLLTPEEEFSFCAKDSQGQAVWQWKVTWAVHQALHGKKDFPVLGAGLEPSQPPDCRCAEYTFQAEGRLCQATYEGEWCRGRPHGKGTLKWPDGRNHVGNFCQGLEHGFGIRLLPQASEDKFDCYKCHWREGSMCGYGICEYSTDEVYKGYFQEGLRHGFGVLESGPQAPQPFRYTGHWERGQRSGYGIEEDGDRGERYIGMWQAGQRHGPGVMVTQAGVCYQGTFQADKTVGPGILLSEDDSLYEGTFTRDLTLMGKGKVTFPNGFTLEGSFGSGAGRGLHTQGVLDTAALPPDPSSTCKRQLGVGAFPVESRWQGVYSPFRDFVCAGCPRDLQEALLGFDVQSSRELRRSQDYLSCERTHPEDSVGSMEDILEELLQHREPKALQLYLRKALSNSLHPLGKLLRTLMLTFQATYAGVGANKHLQELAQEEVKQHAQELWAAYRGLLRVALERKGQALEEDEDTETRDLQVHGLVLPLMLPSFYSELFTLYLLLHEREDSFYSQGIANLSLFPDTQLLEFLDVQKHLWPLKDLTLTSNQRYSLVRDKCFLSATECLQKIMTTVDPREKLEVLERTYGEIEGTVSRVLGREYKLPMDDLLPLLIYVVSRARIQHLGAEIHLIRDMMDPNHTGGLYDFLLTALESCYEHIQKEDMRLHRLPGHWHSRELW</sequence>
<feature type="chain" id="PRO_0000313849" description="ALS2 C-terminal-like protein">
    <location>
        <begin position="1"/>
        <end position="953"/>
    </location>
</feature>
<feature type="repeat" description="MORN 1">
    <location>
        <begin position="358"/>
        <end position="380"/>
    </location>
</feature>
<feature type="repeat" description="MORN 2">
    <location>
        <begin position="381"/>
        <end position="403"/>
    </location>
</feature>
<feature type="repeat" description="MORN 3">
    <location>
        <begin position="409"/>
        <end position="431"/>
    </location>
</feature>
<feature type="repeat" description="MORN 4">
    <location>
        <begin position="432"/>
        <end position="452"/>
    </location>
</feature>
<feature type="repeat" description="MORN 5">
    <location>
        <begin position="459"/>
        <end position="479"/>
    </location>
</feature>
<feature type="repeat" description="MORN 6">
    <location>
        <begin position="483"/>
        <end position="505"/>
    </location>
</feature>
<feature type="repeat" description="MORN 7">
    <location>
        <begin position="506"/>
        <end position="528"/>
    </location>
</feature>
<feature type="repeat" description="MORN 8">
    <location>
        <begin position="529"/>
        <end position="552"/>
    </location>
</feature>
<feature type="domain" description="VPS9" evidence="2">
    <location>
        <begin position="796"/>
        <end position="942"/>
    </location>
</feature>
<feature type="splice variant" id="VSP_030168" description="In isoform 4 and isoform 5." evidence="8 9">
    <location>
        <begin position="1"/>
        <end position="763"/>
    </location>
</feature>
<feature type="splice variant" id="VSP_043859" description="In isoform 6." evidence="8">
    <location>
        <begin position="1"/>
        <end position="653"/>
    </location>
</feature>
<feature type="splice variant" id="VSP_030169" description="In isoform 3." evidence="8">
    <location>
        <begin position="1"/>
        <end position="485"/>
    </location>
</feature>
<feature type="splice variant" id="VSP_030170" description="In isoform 2." evidence="8">
    <location>
        <begin position="1"/>
        <end position="199"/>
    </location>
</feature>
<feature type="splice variant" id="VSP_030171" description="In isoform 4." evidence="8">
    <original>IQHLGAEIHLIRDMMDPNHTGGLYDFLLTALESCYEHIQKEDMRLHRLPGHWHSRELW</original>
    <variation>WGSQGPEKGGSQPGCWGARGRVRTTPQVSSHPGQRSFPSCLSATGLFSLSPSLSWWGGVLQNSAPGSRDPPDP</variation>
    <location>
        <begin position="896"/>
        <end position="953"/>
    </location>
</feature>
<feature type="sequence variant" id="VAR_061554" description="In dbSNP:rs59661801.">
    <original>Q</original>
    <variation>R</variation>
    <location>
        <position position="29"/>
    </location>
</feature>
<feature type="sequence variant" id="VAR_037791" description="In dbSNP:rs7642448." evidence="7">
    <original>E</original>
    <variation>Q</variation>
    <location>
        <position position="45"/>
    </location>
</feature>
<feature type="sequence variant" id="VAR_037792" description="In a breast cancer sample; somatic mutation." evidence="5">
    <original>Q</original>
    <variation>E</variation>
    <location>
        <position position="280"/>
    </location>
</feature>
<feature type="sequence variant" id="VAR_037793" description="In a breast cancer sample; somatic mutation." evidence="5">
    <original>L</original>
    <variation>F</variation>
    <location>
        <position position="576"/>
    </location>
</feature>
<feature type="sequence conflict" description="In Ref. 2; BAD18448." evidence="10" ref="2">
    <original>L</original>
    <variation>P</variation>
    <location>
        <position position="172"/>
    </location>
</feature>
<feature type="sequence conflict" description="In Ref. 2; BAD18448." evidence="10" ref="2">
    <original>E</original>
    <variation>G</variation>
    <location>
        <position position="430"/>
    </location>
</feature>
<feature type="sequence conflict" description="In Ref. 2; BAD18450." evidence="10" ref="2">
    <original>E</original>
    <variation>G</variation>
    <location>
        <position position="711"/>
    </location>
</feature>
<feature type="sequence conflict" description="In Ref. 2; BAD18448." evidence="10" ref="2">
    <original>R</original>
    <variation>H</variation>
    <location>
        <position position="893"/>
    </location>
</feature>
<protein>
    <recommendedName>
        <fullName>ALS2 C-terminal-like protein</fullName>
    </recommendedName>
</protein>
<proteinExistence type="evidence at protein level"/>
<comment type="function">
    <text evidence="3 4 6">Acts as a guanine nucleotide exchange factor (GEF) for Rab5 GTPase. Regulates the ALS2-mediated endosome dynamics.</text>
</comment>
<comment type="subunit">
    <text evidence="1 3 6">Homodimer. Forms a heteromeric complex with ALS2 (By similarity). Interacts with ALS2 and RAB5A.</text>
</comment>
<comment type="interaction">
    <interactant intactId="EBI-12078276">
        <id>Q60I27</id>
    </interactant>
    <interactant intactId="EBI-12108304">
        <id>Q96AZ1</id>
        <label>EEF1AKMT3</label>
    </interactant>
    <organismsDiffer>false</organismsDiffer>
    <experiments>3</experiments>
</comment>
<comment type="interaction">
    <interactant intactId="EBI-12078276">
        <id>Q60I27</id>
    </interactant>
    <interactant intactId="EBI-399456">
        <id>Q9UL26</id>
        <label>RAB22A</label>
    </interactant>
    <organismsDiffer>false</organismsDiffer>
    <experiments>3</experiments>
</comment>
<comment type="interaction">
    <interactant intactId="EBI-12078276">
        <id>Q60I27</id>
    </interactant>
    <interactant intactId="EBI-725987">
        <id>Q13636</id>
        <label>RAB31</label>
    </interactant>
    <organismsDiffer>false</organismsDiffer>
    <experiments>3</experiments>
</comment>
<comment type="interaction">
    <interactant intactId="EBI-12078276">
        <id>Q60I27</id>
    </interactant>
    <interactant intactId="EBI-1054923">
        <id>P51148</id>
        <label>RAB5C</label>
    </interactant>
    <organismsDiffer>false</organismsDiffer>
    <experiments>3</experiments>
</comment>
<comment type="interaction">
    <interactant intactId="EBI-12078276">
        <id>Q60I27</id>
    </interactant>
    <interactant intactId="EBI-748350">
        <id>Q9UHP6</id>
        <label>RSPH14</label>
    </interactant>
    <organismsDiffer>false</organismsDiffer>
    <experiments>3</experiments>
</comment>
<comment type="interaction">
    <interactant intactId="EBI-12078276">
        <id>Q60I27</id>
    </interactant>
    <interactant intactId="EBI-12000762">
        <id>Q7Z5V6-2</id>
        <label>SAXO4</label>
    </interactant>
    <organismsDiffer>false</organismsDiffer>
    <experiments>3</experiments>
</comment>
<comment type="subcellular location">
    <subcellularLocation>
        <location evidence="3 6">Cytoplasm</location>
    </subcellularLocation>
    <text>Distributed onto the vesicular compartments in the cytoplasm with strong punctated staining. Colocalizes with RAB5A onto the vesicular/membranous compartments in the cytoplasm, particularly to the leading edges of the cells.</text>
</comment>
<comment type="alternative products">
    <event type="alternative splicing"/>
    <isoform>
        <id>Q60I27-1</id>
        <name>1</name>
        <sequence type="displayed"/>
    </isoform>
    <isoform>
        <id>Q60I27-2</id>
        <name>2</name>
        <sequence type="described" ref="VSP_030170"/>
    </isoform>
    <isoform>
        <id>Q60I27-3</id>
        <name>3</name>
        <sequence type="described" ref="VSP_030169"/>
    </isoform>
    <isoform>
        <id>Q60I27-4</id>
        <name>4</name>
        <sequence type="described" ref="VSP_030168 VSP_030171"/>
    </isoform>
    <isoform>
        <id>Q60I27-5</id>
        <name>5</name>
        <sequence type="described" ref="VSP_030168"/>
    </isoform>
    <isoform>
        <id>Q60I27-6</id>
        <name>6</name>
        <sequence type="described" ref="VSP_043859"/>
    </isoform>
</comment>
<comment type="tissue specificity">
    <text evidence="3">Expressed in heart and kidney.</text>
</comment>
<comment type="sequence caution" evidence="10">
    <conflict type="frameshift">
        <sequence resource="EMBL-CDS" id="BAD18450"/>
    </conflict>
</comment>
<accession>Q60I27</accession>
<accession>Q32MA1</accession>
<accession>Q6AI56</accession>
<accession>Q6ZNC5</accession>
<accession>Q6ZNC7</accession>
<accession>Q6ZTL4</accession>
<accession>Q86YD2</accession>
<accession>Q8N9U1</accession>
<accession>Q8NAL7</accession>
<organism>
    <name type="scientific">Homo sapiens</name>
    <name type="common">Human</name>
    <dbReference type="NCBI Taxonomy" id="9606"/>
    <lineage>
        <taxon>Eukaryota</taxon>
        <taxon>Metazoa</taxon>
        <taxon>Chordata</taxon>
        <taxon>Craniata</taxon>
        <taxon>Vertebrata</taxon>
        <taxon>Euteleostomi</taxon>
        <taxon>Mammalia</taxon>
        <taxon>Eutheria</taxon>
        <taxon>Euarchontoglires</taxon>
        <taxon>Primates</taxon>
        <taxon>Haplorrhini</taxon>
        <taxon>Catarrhini</taxon>
        <taxon>Hominidae</taxon>
        <taxon>Homo</taxon>
    </lineage>
</organism>
<name>AL2CL_HUMAN</name>
<keyword id="KW-0025">Alternative splicing</keyword>
<keyword id="KW-0963">Cytoplasm</keyword>
<keyword id="KW-0343">GTPase activation</keyword>
<keyword id="KW-1267">Proteomics identification</keyword>
<keyword id="KW-1185">Reference proteome</keyword>
<keyword id="KW-0677">Repeat</keyword>
<dbReference type="EMBL" id="AB107015">
    <property type="protein sequence ID" value="BAD51817.1"/>
    <property type="molecule type" value="mRNA"/>
</dbReference>
<dbReference type="EMBL" id="AK092455">
    <property type="protein sequence ID" value="BAC03895.1"/>
    <property type="molecule type" value="mRNA"/>
</dbReference>
<dbReference type="EMBL" id="AK093844">
    <property type="protein sequence ID" value="BAC04237.1"/>
    <property type="molecule type" value="mRNA"/>
</dbReference>
<dbReference type="EMBL" id="AK131273">
    <property type="protein sequence ID" value="BAD18450.1"/>
    <property type="status" value="ALT_FRAME"/>
    <property type="molecule type" value="mRNA"/>
</dbReference>
<dbReference type="EMBL" id="AK131270">
    <property type="protein sequence ID" value="BAD18448.1"/>
    <property type="molecule type" value="mRNA"/>
</dbReference>
<dbReference type="EMBL" id="AK126505">
    <property type="protein sequence ID" value="BAC86572.1"/>
    <property type="molecule type" value="mRNA"/>
</dbReference>
<dbReference type="EMBL" id="AC104304">
    <property type="status" value="NOT_ANNOTATED_CDS"/>
    <property type="molecule type" value="Genomic_DNA"/>
</dbReference>
<dbReference type="EMBL" id="AC134504">
    <property type="status" value="NOT_ANNOTATED_CDS"/>
    <property type="molecule type" value="Genomic_DNA"/>
</dbReference>
<dbReference type="EMBL" id="CH471055">
    <property type="protein sequence ID" value="EAW64777.1"/>
    <property type="molecule type" value="Genomic_DNA"/>
</dbReference>
<dbReference type="EMBL" id="BC042906">
    <property type="protein sequence ID" value="AAH42906.1"/>
    <property type="molecule type" value="mRNA"/>
</dbReference>
<dbReference type="EMBL" id="BC061883">
    <property type="protein sequence ID" value="AAH61883.1"/>
    <property type="molecule type" value="mRNA"/>
</dbReference>
<dbReference type="EMBL" id="BC075825">
    <property type="protein sequence ID" value="AAH75825.1"/>
    <property type="molecule type" value="mRNA"/>
</dbReference>
<dbReference type="EMBL" id="BC109233">
    <property type="protein sequence ID" value="AAI09234.1"/>
    <property type="molecule type" value="mRNA"/>
</dbReference>
<dbReference type="EMBL" id="CR627258">
    <property type="protein sequence ID" value="CAH10367.1"/>
    <property type="molecule type" value="mRNA"/>
</dbReference>
<dbReference type="CCDS" id="CCDS2743.1">
    <molecule id="Q60I27-1"/>
</dbReference>
<dbReference type="RefSeq" id="NP_001177636.1">
    <molecule id="Q60I27-1"/>
    <property type="nucleotide sequence ID" value="NM_001190707.2"/>
</dbReference>
<dbReference type="RefSeq" id="NP_667340.2">
    <molecule id="Q60I27-1"/>
    <property type="nucleotide sequence ID" value="NM_147129.4"/>
</dbReference>
<dbReference type="RefSeq" id="XP_005265082.1">
    <property type="nucleotide sequence ID" value="XM_005265025.1"/>
</dbReference>
<dbReference type="SMR" id="Q60I27"/>
<dbReference type="BioGRID" id="129223">
    <property type="interactions" value="15"/>
</dbReference>
<dbReference type="FunCoup" id="Q60I27">
    <property type="interactions" value="497"/>
</dbReference>
<dbReference type="IntAct" id="Q60I27">
    <property type="interactions" value="9"/>
</dbReference>
<dbReference type="STRING" id="9606.ENSP00000313670"/>
<dbReference type="iPTMnet" id="Q60I27"/>
<dbReference type="PhosphoSitePlus" id="Q60I27"/>
<dbReference type="BioMuta" id="ALS2CL"/>
<dbReference type="DMDM" id="74708351"/>
<dbReference type="jPOST" id="Q60I27"/>
<dbReference type="MassIVE" id="Q60I27"/>
<dbReference type="PaxDb" id="9606-ENSP00000313670"/>
<dbReference type="PeptideAtlas" id="Q60I27"/>
<dbReference type="ProteomicsDB" id="65869">
    <molecule id="Q60I27-1"/>
</dbReference>
<dbReference type="ProteomicsDB" id="65870">
    <molecule id="Q60I27-2"/>
</dbReference>
<dbReference type="ProteomicsDB" id="65871">
    <molecule id="Q60I27-3"/>
</dbReference>
<dbReference type="ProteomicsDB" id="65872">
    <molecule id="Q60I27-4"/>
</dbReference>
<dbReference type="ProteomicsDB" id="65873">
    <molecule id="Q60I27-5"/>
</dbReference>
<dbReference type="ProteomicsDB" id="65874">
    <molecule id="Q60I27-6"/>
</dbReference>
<dbReference type="Pumba" id="Q60I27"/>
<dbReference type="Antibodypedia" id="29738">
    <property type="antibodies" value="84 antibodies from 15 providers"/>
</dbReference>
<dbReference type="DNASU" id="259173"/>
<dbReference type="Ensembl" id="ENST00000318962.9">
    <molecule id="Q60I27-1"/>
    <property type="protein sequence ID" value="ENSP00000313670.4"/>
    <property type="gene ID" value="ENSG00000178038.17"/>
</dbReference>
<dbReference type="Ensembl" id="ENST00000415953.5">
    <molecule id="Q60I27-1"/>
    <property type="protein sequence ID" value="ENSP00000413223.1"/>
    <property type="gene ID" value="ENSG00000178038.17"/>
</dbReference>
<dbReference type="GeneID" id="259173"/>
<dbReference type="KEGG" id="hsa:259173"/>
<dbReference type="MANE-Select" id="ENST00000318962.9">
    <property type="protein sequence ID" value="ENSP00000313670.4"/>
    <property type="RefSeq nucleotide sequence ID" value="NM_147129.5"/>
    <property type="RefSeq protein sequence ID" value="NP_667340.2"/>
</dbReference>
<dbReference type="UCSC" id="uc003cpx.3">
    <molecule id="Q60I27-1"/>
    <property type="organism name" value="human"/>
</dbReference>
<dbReference type="AGR" id="HGNC:20605"/>
<dbReference type="CTD" id="259173"/>
<dbReference type="DisGeNET" id="259173"/>
<dbReference type="GeneCards" id="ALS2CL"/>
<dbReference type="HGNC" id="HGNC:20605">
    <property type="gene designation" value="ALS2CL"/>
</dbReference>
<dbReference type="HPA" id="ENSG00000178038">
    <property type="expression patterns" value="Tissue enhanced (esophagus, kidney, skin)"/>
</dbReference>
<dbReference type="MIM" id="612402">
    <property type="type" value="gene"/>
</dbReference>
<dbReference type="neXtProt" id="NX_Q60I27"/>
<dbReference type="OpenTargets" id="ENSG00000178038"/>
<dbReference type="PharmGKB" id="PA134949717"/>
<dbReference type="VEuPathDB" id="HostDB:ENSG00000178038"/>
<dbReference type="eggNOG" id="KOG0231">
    <property type="taxonomic scope" value="Eukaryota"/>
</dbReference>
<dbReference type="GeneTree" id="ENSGT00940000161305"/>
<dbReference type="HOGENOM" id="CLU_013321_0_0_1"/>
<dbReference type="InParanoid" id="Q60I27"/>
<dbReference type="OMA" id="HWQEGSM"/>
<dbReference type="OrthoDB" id="48314at2759"/>
<dbReference type="PAN-GO" id="Q60I27">
    <property type="GO annotations" value="7 GO annotations based on evolutionary models"/>
</dbReference>
<dbReference type="PhylomeDB" id="Q60I27"/>
<dbReference type="TreeFam" id="TF331793"/>
<dbReference type="PathwayCommons" id="Q60I27"/>
<dbReference type="Reactome" id="R-HSA-8876198">
    <property type="pathway name" value="RAB GEFs exchange GTP for GDP on RABs"/>
</dbReference>
<dbReference type="SignaLink" id="Q60I27"/>
<dbReference type="BioGRID-ORCS" id="259173">
    <property type="hits" value="22 hits in 1141 CRISPR screens"/>
</dbReference>
<dbReference type="ChiTaRS" id="ALS2CL">
    <property type="organism name" value="human"/>
</dbReference>
<dbReference type="GenomeRNAi" id="259173"/>
<dbReference type="Pharos" id="Q60I27">
    <property type="development level" value="Tbio"/>
</dbReference>
<dbReference type="PRO" id="PR:Q60I27"/>
<dbReference type="Proteomes" id="UP000005640">
    <property type="component" value="Chromosome 3"/>
</dbReference>
<dbReference type="RNAct" id="Q60I27">
    <property type="molecule type" value="protein"/>
</dbReference>
<dbReference type="Bgee" id="ENSG00000178038">
    <property type="expression patterns" value="Expressed in lower esophagus mucosa and 192 other cell types or tissues"/>
</dbReference>
<dbReference type="ExpressionAtlas" id="Q60I27">
    <property type="expression patterns" value="baseline and differential"/>
</dbReference>
<dbReference type="GO" id="GO:0005737">
    <property type="term" value="C:cytoplasm"/>
    <property type="evidence" value="ECO:0000318"/>
    <property type="project" value="GO_Central"/>
</dbReference>
<dbReference type="GO" id="GO:0031410">
    <property type="term" value="C:cytoplasmic vesicle"/>
    <property type="evidence" value="ECO:0000318"/>
    <property type="project" value="GO_Central"/>
</dbReference>
<dbReference type="GO" id="GO:0005829">
    <property type="term" value="C:cytosol"/>
    <property type="evidence" value="ECO:0000304"/>
    <property type="project" value="Reactome"/>
</dbReference>
<dbReference type="GO" id="GO:0005096">
    <property type="term" value="F:GTPase activator activity"/>
    <property type="evidence" value="ECO:0007669"/>
    <property type="project" value="UniProtKB-KW"/>
</dbReference>
<dbReference type="GO" id="GO:0005085">
    <property type="term" value="F:guanyl-nucleotide exchange factor activity"/>
    <property type="evidence" value="ECO:0000318"/>
    <property type="project" value="GO_Central"/>
</dbReference>
<dbReference type="GO" id="GO:0031267">
    <property type="term" value="F:small GTPase binding"/>
    <property type="evidence" value="ECO:0000318"/>
    <property type="project" value="GO_Central"/>
</dbReference>
<dbReference type="GO" id="GO:0016197">
    <property type="term" value="P:endosomal transport"/>
    <property type="evidence" value="ECO:0000318"/>
    <property type="project" value="GO_Central"/>
</dbReference>
<dbReference type="FunFam" id="1.20.900.10:FF:000043">
    <property type="entry name" value="ALS2 C-terminal like"/>
    <property type="match status" value="1"/>
</dbReference>
<dbReference type="FunFam" id="1.20.1050.80:FF:000006">
    <property type="entry name" value="ALS2 C-terminal-like protein"/>
    <property type="match status" value="1"/>
</dbReference>
<dbReference type="Gene3D" id="1.20.900.10">
    <property type="entry name" value="Dbl homology (DH) domain"/>
    <property type="match status" value="1"/>
</dbReference>
<dbReference type="Gene3D" id="2.20.110.10">
    <property type="entry name" value="Histone H3 K4-specific methyltransferase SET7/9 N-terminal domain"/>
    <property type="match status" value="3"/>
</dbReference>
<dbReference type="Gene3D" id="1.20.1050.80">
    <property type="entry name" value="VPS9 domain"/>
    <property type="match status" value="1"/>
</dbReference>
<dbReference type="InterPro" id="IPR051984">
    <property type="entry name" value="Alsin_GEFs/MotNeuronReg"/>
</dbReference>
<dbReference type="InterPro" id="IPR035899">
    <property type="entry name" value="DBL_dom_sf"/>
</dbReference>
<dbReference type="InterPro" id="IPR003409">
    <property type="entry name" value="MORN"/>
</dbReference>
<dbReference type="InterPro" id="IPR003123">
    <property type="entry name" value="VPS9"/>
</dbReference>
<dbReference type="InterPro" id="IPR037191">
    <property type="entry name" value="VPS9_dom_sf"/>
</dbReference>
<dbReference type="PANTHER" id="PTHR46089:SF1">
    <property type="entry name" value="ALS2 C-TERMINAL-LIKE PROTEIN"/>
    <property type="match status" value="1"/>
</dbReference>
<dbReference type="PANTHER" id="PTHR46089">
    <property type="entry name" value="ALSIN HOMOLOG"/>
    <property type="match status" value="1"/>
</dbReference>
<dbReference type="Pfam" id="PF02493">
    <property type="entry name" value="MORN"/>
    <property type="match status" value="7"/>
</dbReference>
<dbReference type="Pfam" id="PF25383">
    <property type="entry name" value="PH_alsin"/>
    <property type="match status" value="1"/>
</dbReference>
<dbReference type="Pfam" id="PF02204">
    <property type="entry name" value="VPS9"/>
    <property type="match status" value="1"/>
</dbReference>
<dbReference type="SMART" id="SM00698">
    <property type="entry name" value="MORN"/>
    <property type="match status" value="7"/>
</dbReference>
<dbReference type="SUPFAM" id="SSF48065">
    <property type="entry name" value="DBL homology domain (DH-domain)"/>
    <property type="match status" value="1"/>
</dbReference>
<dbReference type="SUPFAM" id="SSF82185">
    <property type="entry name" value="Histone H3 K4-specific methyltransferase SET7/9 N-terminal domain"/>
    <property type="match status" value="2"/>
</dbReference>
<dbReference type="SUPFAM" id="SSF109993">
    <property type="entry name" value="VPS9 domain"/>
    <property type="match status" value="1"/>
</dbReference>
<dbReference type="PROSITE" id="PS51205">
    <property type="entry name" value="VPS9"/>
    <property type="match status" value="1"/>
</dbReference>
<evidence type="ECO:0000250" key="1"/>
<evidence type="ECO:0000255" key="2">
    <source>
        <dbReference type="PROSITE-ProRule" id="PRU00550"/>
    </source>
</evidence>
<evidence type="ECO:0000269" key="3">
    <source>
    </source>
</evidence>
<evidence type="ECO:0000269" key="4">
    <source>
    </source>
</evidence>
<evidence type="ECO:0000269" key="5">
    <source>
    </source>
</evidence>
<evidence type="ECO:0000269" key="6">
    <source>
    </source>
</evidence>
<evidence type="ECO:0000269" key="7">
    <source>
    </source>
</evidence>
<evidence type="ECO:0000303" key="8">
    <source>
    </source>
</evidence>
<evidence type="ECO:0000303" key="9">
    <source>
    </source>
</evidence>
<evidence type="ECO:0000305" key="10"/>
<gene>
    <name type="primary">ALS2CL</name>
</gene>